<name>SYH_DESAL</name>
<feature type="chain" id="PRO_1000199125" description="Histidine--tRNA ligase">
    <location>
        <begin position="1"/>
        <end position="419"/>
    </location>
</feature>
<protein>
    <recommendedName>
        <fullName evidence="1">Histidine--tRNA ligase</fullName>
        <ecNumber evidence="1">6.1.1.21</ecNumber>
    </recommendedName>
    <alternativeName>
        <fullName evidence="1">Histidyl-tRNA synthetase</fullName>
        <shortName evidence="1">HisRS</shortName>
    </alternativeName>
</protein>
<comment type="catalytic activity">
    <reaction evidence="1">
        <text>tRNA(His) + L-histidine + ATP = L-histidyl-tRNA(His) + AMP + diphosphate + H(+)</text>
        <dbReference type="Rhea" id="RHEA:17313"/>
        <dbReference type="Rhea" id="RHEA-COMP:9665"/>
        <dbReference type="Rhea" id="RHEA-COMP:9689"/>
        <dbReference type="ChEBI" id="CHEBI:15378"/>
        <dbReference type="ChEBI" id="CHEBI:30616"/>
        <dbReference type="ChEBI" id="CHEBI:33019"/>
        <dbReference type="ChEBI" id="CHEBI:57595"/>
        <dbReference type="ChEBI" id="CHEBI:78442"/>
        <dbReference type="ChEBI" id="CHEBI:78527"/>
        <dbReference type="ChEBI" id="CHEBI:456215"/>
        <dbReference type="EC" id="6.1.1.21"/>
    </reaction>
</comment>
<comment type="subunit">
    <text evidence="1">Homodimer.</text>
</comment>
<comment type="subcellular location">
    <subcellularLocation>
        <location evidence="1">Cytoplasm</location>
    </subcellularLocation>
</comment>
<comment type="similarity">
    <text evidence="1">Belongs to the class-II aminoacyl-tRNA synthetase family.</text>
</comment>
<gene>
    <name evidence="1" type="primary">hisS</name>
    <name type="ordered locus">Dalk_2757</name>
</gene>
<organism>
    <name type="scientific">Desulfatibacillum aliphaticivorans</name>
    <dbReference type="NCBI Taxonomy" id="218208"/>
    <lineage>
        <taxon>Bacteria</taxon>
        <taxon>Pseudomonadati</taxon>
        <taxon>Thermodesulfobacteriota</taxon>
        <taxon>Desulfobacteria</taxon>
        <taxon>Desulfobacterales</taxon>
        <taxon>Desulfatibacillaceae</taxon>
        <taxon>Desulfatibacillum</taxon>
    </lineage>
</organism>
<reference key="1">
    <citation type="journal article" date="2012" name="Environ. Microbiol.">
        <title>The genome sequence of Desulfatibacillum alkenivorans AK-01: a blueprint for anaerobic alkane oxidation.</title>
        <authorList>
            <person name="Callaghan A.V."/>
            <person name="Morris B.E."/>
            <person name="Pereira I.A."/>
            <person name="McInerney M.J."/>
            <person name="Austin R.N."/>
            <person name="Groves J.T."/>
            <person name="Kukor J.J."/>
            <person name="Suflita J.M."/>
            <person name="Young L.Y."/>
            <person name="Zylstra G.J."/>
            <person name="Wawrik B."/>
        </authorList>
    </citation>
    <scope>NUCLEOTIDE SEQUENCE [LARGE SCALE GENOMIC DNA]</scope>
    <source>
        <strain>AK-01</strain>
    </source>
</reference>
<dbReference type="EC" id="6.1.1.21" evidence="1"/>
<dbReference type="EMBL" id="CP001322">
    <property type="protein sequence ID" value="ACL04449.1"/>
    <property type="molecule type" value="Genomic_DNA"/>
</dbReference>
<dbReference type="RefSeq" id="WP_015947519.1">
    <property type="nucleotide sequence ID" value="NC_011768.1"/>
</dbReference>
<dbReference type="SMR" id="B8FKS7"/>
<dbReference type="KEGG" id="dal:Dalk_2757"/>
<dbReference type="eggNOG" id="COG0124">
    <property type="taxonomic scope" value="Bacteria"/>
</dbReference>
<dbReference type="HOGENOM" id="CLU_025113_1_1_7"/>
<dbReference type="Proteomes" id="UP000000739">
    <property type="component" value="Chromosome"/>
</dbReference>
<dbReference type="GO" id="GO:0005737">
    <property type="term" value="C:cytoplasm"/>
    <property type="evidence" value="ECO:0007669"/>
    <property type="project" value="UniProtKB-SubCell"/>
</dbReference>
<dbReference type="GO" id="GO:0005524">
    <property type="term" value="F:ATP binding"/>
    <property type="evidence" value="ECO:0007669"/>
    <property type="project" value="UniProtKB-UniRule"/>
</dbReference>
<dbReference type="GO" id="GO:0004821">
    <property type="term" value="F:histidine-tRNA ligase activity"/>
    <property type="evidence" value="ECO:0007669"/>
    <property type="project" value="UniProtKB-UniRule"/>
</dbReference>
<dbReference type="GO" id="GO:0006427">
    <property type="term" value="P:histidyl-tRNA aminoacylation"/>
    <property type="evidence" value="ECO:0007669"/>
    <property type="project" value="UniProtKB-UniRule"/>
</dbReference>
<dbReference type="CDD" id="cd00773">
    <property type="entry name" value="HisRS-like_core"/>
    <property type="match status" value="1"/>
</dbReference>
<dbReference type="CDD" id="cd00859">
    <property type="entry name" value="HisRS_anticodon"/>
    <property type="match status" value="1"/>
</dbReference>
<dbReference type="Gene3D" id="3.40.50.800">
    <property type="entry name" value="Anticodon-binding domain"/>
    <property type="match status" value="1"/>
</dbReference>
<dbReference type="Gene3D" id="3.30.930.10">
    <property type="entry name" value="Bira Bifunctional Protein, Domain 2"/>
    <property type="match status" value="1"/>
</dbReference>
<dbReference type="HAMAP" id="MF_00127">
    <property type="entry name" value="His_tRNA_synth"/>
    <property type="match status" value="1"/>
</dbReference>
<dbReference type="InterPro" id="IPR006195">
    <property type="entry name" value="aa-tRNA-synth_II"/>
</dbReference>
<dbReference type="InterPro" id="IPR045864">
    <property type="entry name" value="aa-tRNA-synth_II/BPL/LPL"/>
</dbReference>
<dbReference type="InterPro" id="IPR004154">
    <property type="entry name" value="Anticodon-bd"/>
</dbReference>
<dbReference type="InterPro" id="IPR036621">
    <property type="entry name" value="Anticodon-bd_dom_sf"/>
</dbReference>
<dbReference type="InterPro" id="IPR015807">
    <property type="entry name" value="His-tRNA-ligase"/>
</dbReference>
<dbReference type="InterPro" id="IPR041715">
    <property type="entry name" value="HisRS-like_core"/>
</dbReference>
<dbReference type="InterPro" id="IPR004516">
    <property type="entry name" value="HisRS/HisZ"/>
</dbReference>
<dbReference type="InterPro" id="IPR033656">
    <property type="entry name" value="HisRS_anticodon"/>
</dbReference>
<dbReference type="NCBIfam" id="TIGR00442">
    <property type="entry name" value="hisS"/>
    <property type="match status" value="1"/>
</dbReference>
<dbReference type="PANTHER" id="PTHR43707:SF1">
    <property type="entry name" value="HISTIDINE--TRNA LIGASE, MITOCHONDRIAL-RELATED"/>
    <property type="match status" value="1"/>
</dbReference>
<dbReference type="PANTHER" id="PTHR43707">
    <property type="entry name" value="HISTIDYL-TRNA SYNTHETASE"/>
    <property type="match status" value="1"/>
</dbReference>
<dbReference type="Pfam" id="PF03129">
    <property type="entry name" value="HGTP_anticodon"/>
    <property type="match status" value="1"/>
</dbReference>
<dbReference type="Pfam" id="PF13393">
    <property type="entry name" value="tRNA-synt_His"/>
    <property type="match status" value="1"/>
</dbReference>
<dbReference type="PIRSF" id="PIRSF001549">
    <property type="entry name" value="His-tRNA_synth"/>
    <property type="match status" value="1"/>
</dbReference>
<dbReference type="SUPFAM" id="SSF52954">
    <property type="entry name" value="Class II aaRS ABD-related"/>
    <property type="match status" value="1"/>
</dbReference>
<dbReference type="SUPFAM" id="SSF55681">
    <property type="entry name" value="Class II aaRS and biotin synthetases"/>
    <property type="match status" value="1"/>
</dbReference>
<dbReference type="PROSITE" id="PS50862">
    <property type="entry name" value="AA_TRNA_LIGASE_II"/>
    <property type="match status" value="1"/>
</dbReference>
<keyword id="KW-0030">Aminoacyl-tRNA synthetase</keyword>
<keyword id="KW-0067">ATP-binding</keyword>
<keyword id="KW-0963">Cytoplasm</keyword>
<keyword id="KW-0436">Ligase</keyword>
<keyword id="KW-0547">Nucleotide-binding</keyword>
<keyword id="KW-0648">Protein biosynthesis</keyword>
<keyword id="KW-1185">Reference proteome</keyword>
<sequence length="419" mass="46701">MIKLIRGFRDILPGQVELWQDIESKARVLLENFGFREIRLPIMESTELFARGIGADTDIVEKEMYTFPDSKGRGQTLRPEATASVVRSYIEHGYAGSDPVQKFYTIGPMFRHERPQKGRYRQFYQINAEMFGVASPLADVQIMYMLHLFFTGLDVPDVVTHVNSLGCPECRPKFREALISFVSDKMDRLCSDCQRRADANPLRVIDCKVPGCKEAVQGAPSIQDHLCPDCKEHFEAVIKGLDGLNVPYEIDPRLVRGLDYYTRTTFEVQTTLLGAQNAVAGGGRYDGLVKILGGKETPAIGFAVGFDRLAALLGAEEKDFTVPPALFIAALGDEARKIAFGWLCDFNARGVRAEMDYEGKSLKSQMKQANRFNAGRVLILGENELQNGMAVLRNMDTKEQEEVALDGLTDRVAALINQG</sequence>
<accession>B8FKS7</accession>
<proteinExistence type="inferred from homology"/>
<evidence type="ECO:0000255" key="1">
    <source>
        <dbReference type="HAMAP-Rule" id="MF_00127"/>
    </source>
</evidence>